<evidence type="ECO:0000255" key="1">
    <source>
        <dbReference type="HAMAP-Rule" id="MF_00065"/>
    </source>
</evidence>
<gene>
    <name evidence="1" type="primary">cysC</name>
    <name type="ordered locus">SO_3723</name>
</gene>
<proteinExistence type="inferred from homology"/>
<protein>
    <recommendedName>
        <fullName evidence="1">Adenylyl-sulfate kinase</fullName>
        <ecNumber evidence="1">2.7.1.25</ecNumber>
    </recommendedName>
    <alternativeName>
        <fullName evidence="1">APS kinase</fullName>
    </alternativeName>
    <alternativeName>
        <fullName evidence="1">ATP adenosine-5'-phosphosulfate 3'-phosphotransferase</fullName>
    </alternativeName>
    <alternativeName>
        <fullName evidence="1">Adenosine-5'-phosphosulfate kinase</fullName>
    </alternativeName>
</protein>
<name>CYSC_SHEON</name>
<reference key="1">
    <citation type="journal article" date="2002" name="Nat. Biotechnol.">
        <title>Genome sequence of the dissimilatory metal ion-reducing bacterium Shewanella oneidensis.</title>
        <authorList>
            <person name="Heidelberg J.F."/>
            <person name="Paulsen I.T."/>
            <person name="Nelson K.E."/>
            <person name="Gaidos E.J."/>
            <person name="Nelson W.C."/>
            <person name="Read T.D."/>
            <person name="Eisen J.A."/>
            <person name="Seshadri R."/>
            <person name="Ward N.L."/>
            <person name="Methe B.A."/>
            <person name="Clayton R.A."/>
            <person name="Meyer T."/>
            <person name="Tsapin A."/>
            <person name="Scott J."/>
            <person name="Beanan M.J."/>
            <person name="Brinkac L.M."/>
            <person name="Daugherty S.C."/>
            <person name="DeBoy R.T."/>
            <person name="Dodson R.J."/>
            <person name="Durkin A.S."/>
            <person name="Haft D.H."/>
            <person name="Kolonay J.F."/>
            <person name="Madupu R."/>
            <person name="Peterson J.D."/>
            <person name="Umayam L.A."/>
            <person name="White O."/>
            <person name="Wolf A.M."/>
            <person name="Vamathevan J.J."/>
            <person name="Weidman J.F."/>
            <person name="Impraim M."/>
            <person name="Lee K."/>
            <person name="Berry K.J."/>
            <person name="Lee C."/>
            <person name="Mueller J."/>
            <person name="Khouri H.M."/>
            <person name="Gill J."/>
            <person name="Utterback T.R."/>
            <person name="McDonald L.A."/>
            <person name="Feldblyum T.V."/>
            <person name="Smith H.O."/>
            <person name="Venter J.C."/>
            <person name="Nealson K.H."/>
            <person name="Fraser C.M."/>
        </authorList>
    </citation>
    <scope>NUCLEOTIDE SEQUENCE [LARGE SCALE GENOMIC DNA]</scope>
    <source>
        <strain>ATCC 700550 / JCM 31522 / CIP 106686 / LMG 19005 / NCIMB 14063 / MR-1</strain>
    </source>
</reference>
<comment type="function">
    <text evidence="1">Catalyzes the synthesis of activated sulfate.</text>
</comment>
<comment type="catalytic activity">
    <reaction evidence="1">
        <text>adenosine 5'-phosphosulfate + ATP = 3'-phosphoadenylyl sulfate + ADP + H(+)</text>
        <dbReference type="Rhea" id="RHEA:24152"/>
        <dbReference type="ChEBI" id="CHEBI:15378"/>
        <dbReference type="ChEBI" id="CHEBI:30616"/>
        <dbReference type="ChEBI" id="CHEBI:58243"/>
        <dbReference type="ChEBI" id="CHEBI:58339"/>
        <dbReference type="ChEBI" id="CHEBI:456216"/>
        <dbReference type="EC" id="2.7.1.25"/>
    </reaction>
</comment>
<comment type="pathway">
    <text evidence="1">Sulfur metabolism; hydrogen sulfide biosynthesis; sulfite from sulfate: step 2/3.</text>
</comment>
<comment type="similarity">
    <text evidence="1">Belongs to the APS kinase family.</text>
</comment>
<accession>Q8EB13</accession>
<sequence>MSNIVWHQHSVDQAARARLKGQNPVLLWFTGLSGAGKSTLAGALERALFEAGFHTYLLDGDNVRHGLCKDLGFSVADRDENLRRVGEVAKLMVDAGLVVLSAFISPTREERDSIRARFPEGQFIEVHVSTPLSVCELRDPKGLYVKARKGEIAHFTGISSPYEAPLSAELTIDTSKGDLASQVHALIDYLTAIDVISSNRLASLA</sequence>
<feature type="chain" id="PRO_0000105918" description="Adenylyl-sulfate kinase">
    <location>
        <begin position="1"/>
        <end position="205"/>
    </location>
</feature>
<feature type="active site" description="Phosphoserine intermediate" evidence="1">
    <location>
        <position position="105"/>
    </location>
</feature>
<feature type="binding site" evidence="1">
    <location>
        <begin position="31"/>
        <end position="38"/>
    </location>
    <ligand>
        <name>ATP</name>
        <dbReference type="ChEBI" id="CHEBI:30616"/>
    </ligand>
</feature>
<keyword id="KW-0067">ATP-binding</keyword>
<keyword id="KW-0418">Kinase</keyword>
<keyword id="KW-0547">Nucleotide-binding</keyword>
<keyword id="KW-0597">Phosphoprotein</keyword>
<keyword id="KW-1185">Reference proteome</keyword>
<keyword id="KW-0808">Transferase</keyword>
<dbReference type="EC" id="2.7.1.25" evidence="1"/>
<dbReference type="EMBL" id="AE014299">
    <property type="protein sequence ID" value="AAN56707.1"/>
    <property type="molecule type" value="Genomic_DNA"/>
</dbReference>
<dbReference type="RefSeq" id="NP_719263.1">
    <property type="nucleotide sequence ID" value="NC_004347.2"/>
</dbReference>
<dbReference type="RefSeq" id="WP_011073511.1">
    <property type="nucleotide sequence ID" value="NC_004347.2"/>
</dbReference>
<dbReference type="SMR" id="Q8EB13"/>
<dbReference type="STRING" id="211586.SO_3723"/>
<dbReference type="PaxDb" id="211586-SO_3723"/>
<dbReference type="KEGG" id="son:SO_3723"/>
<dbReference type="PATRIC" id="fig|211586.12.peg.3605"/>
<dbReference type="eggNOG" id="COG0529">
    <property type="taxonomic scope" value="Bacteria"/>
</dbReference>
<dbReference type="HOGENOM" id="CLU_046932_1_0_6"/>
<dbReference type="OrthoDB" id="9804504at2"/>
<dbReference type="PhylomeDB" id="Q8EB13"/>
<dbReference type="BioCyc" id="SONE211586:G1GMP-3461-MONOMER"/>
<dbReference type="UniPathway" id="UPA00140">
    <property type="reaction ID" value="UER00205"/>
</dbReference>
<dbReference type="Proteomes" id="UP000008186">
    <property type="component" value="Chromosome"/>
</dbReference>
<dbReference type="GO" id="GO:0004020">
    <property type="term" value="F:adenylylsulfate kinase activity"/>
    <property type="evidence" value="ECO:0000318"/>
    <property type="project" value="GO_Central"/>
</dbReference>
<dbReference type="GO" id="GO:0005524">
    <property type="term" value="F:ATP binding"/>
    <property type="evidence" value="ECO:0007669"/>
    <property type="project" value="UniProtKB-UniRule"/>
</dbReference>
<dbReference type="GO" id="GO:0070814">
    <property type="term" value="P:hydrogen sulfide biosynthetic process"/>
    <property type="evidence" value="ECO:0007669"/>
    <property type="project" value="UniProtKB-UniRule"/>
</dbReference>
<dbReference type="GO" id="GO:0000103">
    <property type="term" value="P:sulfate assimilation"/>
    <property type="evidence" value="ECO:0000318"/>
    <property type="project" value="GO_Central"/>
</dbReference>
<dbReference type="CDD" id="cd02027">
    <property type="entry name" value="APSK"/>
    <property type="match status" value="1"/>
</dbReference>
<dbReference type="FunFam" id="3.40.50.300:FF:000212">
    <property type="entry name" value="Adenylyl-sulfate kinase"/>
    <property type="match status" value="1"/>
</dbReference>
<dbReference type="Gene3D" id="3.40.50.300">
    <property type="entry name" value="P-loop containing nucleotide triphosphate hydrolases"/>
    <property type="match status" value="1"/>
</dbReference>
<dbReference type="HAMAP" id="MF_00065">
    <property type="entry name" value="Adenylyl_sulf_kinase"/>
    <property type="match status" value="1"/>
</dbReference>
<dbReference type="InterPro" id="IPR002891">
    <property type="entry name" value="APS_kinase"/>
</dbReference>
<dbReference type="InterPro" id="IPR027417">
    <property type="entry name" value="P-loop_NTPase"/>
</dbReference>
<dbReference type="NCBIfam" id="TIGR00455">
    <property type="entry name" value="apsK"/>
    <property type="match status" value="1"/>
</dbReference>
<dbReference type="NCBIfam" id="NF003013">
    <property type="entry name" value="PRK03846.1"/>
    <property type="match status" value="1"/>
</dbReference>
<dbReference type="PANTHER" id="PTHR11055:SF63">
    <property type="entry name" value="ADENYLYL-SULFATE KINASE 1, CHLOROPLASTIC"/>
    <property type="match status" value="1"/>
</dbReference>
<dbReference type="PANTHER" id="PTHR11055">
    <property type="entry name" value="BIFUNCTIONAL 3'-PHOSPHOADENOSINE 5'-PHOSPHOSULFATE SYNTHASE"/>
    <property type="match status" value="1"/>
</dbReference>
<dbReference type="Pfam" id="PF01583">
    <property type="entry name" value="APS_kinase"/>
    <property type="match status" value="1"/>
</dbReference>
<dbReference type="SUPFAM" id="SSF52540">
    <property type="entry name" value="P-loop containing nucleoside triphosphate hydrolases"/>
    <property type="match status" value="1"/>
</dbReference>
<organism>
    <name type="scientific">Shewanella oneidensis (strain ATCC 700550 / JCM 31522 / CIP 106686 / LMG 19005 / NCIMB 14063 / MR-1)</name>
    <dbReference type="NCBI Taxonomy" id="211586"/>
    <lineage>
        <taxon>Bacteria</taxon>
        <taxon>Pseudomonadati</taxon>
        <taxon>Pseudomonadota</taxon>
        <taxon>Gammaproteobacteria</taxon>
        <taxon>Alteromonadales</taxon>
        <taxon>Shewanellaceae</taxon>
        <taxon>Shewanella</taxon>
    </lineage>
</organism>